<feature type="chain" id="PRO_0000284154" description="Endoribonuclease YbeY">
    <location>
        <begin position="1"/>
        <end position="166"/>
    </location>
</feature>
<feature type="binding site" evidence="1">
    <location>
        <position position="125"/>
    </location>
    <ligand>
        <name>Zn(2+)</name>
        <dbReference type="ChEBI" id="CHEBI:29105"/>
        <note>catalytic</note>
    </ligand>
</feature>
<feature type="binding site" evidence="1">
    <location>
        <position position="129"/>
    </location>
    <ligand>
        <name>Zn(2+)</name>
        <dbReference type="ChEBI" id="CHEBI:29105"/>
        <note>catalytic</note>
    </ligand>
</feature>
<feature type="binding site" evidence="1">
    <location>
        <position position="135"/>
    </location>
    <ligand>
        <name>Zn(2+)</name>
        <dbReference type="ChEBI" id="CHEBI:29105"/>
        <note>catalytic</note>
    </ligand>
</feature>
<name>YBEY_ALKEH</name>
<keyword id="KW-0963">Cytoplasm</keyword>
<keyword id="KW-0255">Endonuclease</keyword>
<keyword id="KW-0378">Hydrolase</keyword>
<keyword id="KW-0479">Metal-binding</keyword>
<keyword id="KW-0540">Nuclease</keyword>
<keyword id="KW-1185">Reference proteome</keyword>
<keyword id="KW-0690">Ribosome biogenesis</keyword>
<keyword id="KW-0698">rRNA processing</keyword>
<keyword id="KW-0862">Zinc</keyword>
<evidence type="ECO:0000255" key="1">
    <source>
        <dbReference type="HAMAP-Rule" id="MF_00009"/>
    </source>
</evidence>
<gene>
    <name evidence="1" type="primary">ybeY</name>
    <name type="ordered locus">Mlg_0396</name>
</gene>
<reference key="1">
    <citation type="submission" date="2006-08" db="EMBL/GenBank/DDBJ databases">
        <title>Complete sequence of Alkalilimnicola ehrilichei MLHE-1.</title>
        <authorList>
            <person name="Copeland A."/>
            <person name="Lucas S."/>
            <person name="Lapidus A."/>
            <person name="Barry K."/>
            <person name="Detter J.C."/>
            <person name="Glavina del Rio T."/>
            <person name="Hammon N."/>
            <person name="Israni S."/>
            <person name="Dalin E."/>
            <person name="Tice H."/>
            <person name="Pitluck S."/>
            <person name="Sims D."/>
            <person name="Brettin T."/>
            <person name="Bruce D."/>
            <person name="Han C."/>
            <person name="Tapia R."/>
            <person name="Gilna P."/>
            <person name="Schmutz J."/>
            <person name="Larimer F."/>
            <person name="Land M."/>
            <person name="Hauser L."/>
            <person name="Kyrpides N."/>
            <person name="Mikhailova N."/>
            <person name="Oremland R.S."/>
            <person name="Hoeft S.E."/>
            <person name="Switzer-Blum J."/>
            <person name="Kulp T."/>
            <person name="King G."/>
            <person name="Tabita R."/>
            <person name="Witte B."/>
            <person name="Santini J.M."/>
            <person name="Basu P."/>
            <person name="Hollibaugh J.T."/>
            <person name="Xie G."/>
            <person name="Stolz J.F."/>
            <person name="Richardson P."/>
        </authorList>
    </citation>
    <scope>NUCLEOTIDE SEQUENCE [LARGE SCALE GENOMIC DNA]</scope>
    <source>
        <strain>ATCC BAA-1101 / DSM 17681 / MLHE-1</strain>
    </source>
</reference>
<accession>Q0ABN7</accession>
<sequence length="166" mass="18068">MTAAVNDAPALDLEVQYVVAWRAGLPPEAAFRRWVSAALAAGGHTGPAALAVRVVDKAEGRRLNHDYRGRDYPTNVLSFPFEAPPGLDEPLPELGDLVICAPVVEREAREQGKPEADHWAHLVVHGVLHLLGYDHEAAEEAEAMEGLERRILAGLGIADPYRLDEQ</sequence>
<organism>
    <name type="scientific">Alkalilimnicola ehrlichii (strain ATCC BAA-1101 / DSM 17681 / MLHE-1)</name>
    <dbReference type="NCBI Taxonomy" id="187272"/>
    <lineage>
        <taxon>Bacteria</taxon>
        <taxon>Pseudomonadati</taxon>
        <taxon>Pseudomonadota</taxon>
        <taxon>Gammaproteobacteria</taxon>
        <taxon>Chromatiales</taxon>
        <taxon>Ectothiorhodospiraceae</taxon>
        <taxon>Alkalilimnicola</taxon>
    </lineage>
</organism>
<comment type="function">
    <text evidence="1">Single strand-specific metallo-endoribonuclease involved in late-stage 70S ribosome quality control and in maturation of the 3' terminus of the 16S rRNA.</text>
</comment>
<comment type="cofactor">
    <cofactor evidence="1">
        <name>Zn(2+)</name>
        <dbReference type="ChEBI" id="CHEBI:29105"/>
    </cofactor>
    <text evidence="1">Binds 1 zinc ion.</text>
</comment>
<comment type="subcellular location">
    <subcellularLocation>
        <location evidence="1">Cytoplasm</location>
    </subcellularLocation>
</comment>
<comment type="similarity">
    <text evidence="1">Belongs to the endoribonuclease YbeY family.</text>
</comment>
<dbReference type="EC" id="3.1.-.-" evidence="1"/>
<dbReference type="EMBL" id="CP000453">
    <property type="protein sequence ID" value="ABI55750.1"/>
    <property type="molecule type" value="Genomic_DNA"/>
</dbReference>
<dbReference type="RefSeq" id="WP_011628146.1">
    <property type="nucleotide sequence ID" value="NC_008340.1"/>
</dbReference>
<dbReference type="SMR" id="Q0ABN7"/>
<dbReference type="KEGG" id="aeh:Mlg_0396"/>
<dbReference type="eggNOG" id="COG0319">
    <property type="taxonomic scope" value="Bacteria"/>
</dbReference>
<dbReference type="HOGENOM" id="CLU_106710_0_1_6"/>
<dbReference type="OrthoDB" id="9807740at2"/>
<dbReference type="Proteomes" id="UP000001962">
    <property type="component" value="Chromosome"/>
</dbReference>
<dbReference type="GO" id="GO:0005737">
    <property type="term" value="C:cytoplasm"/>
    <property type="evidence" value="ECO:0007669"/>
    <property type="project" value="UniProtKB-SubCell"/>
</dbReference>
<dbReference type="GO" id="GO:0004222">
    <property type="term" value="F:metalloendopeptidase activity"/>
    <property type="evidence" value="ECO:0007669"/>
    <property type="project" value="InterPro"/>
</dbReference>
<dbReference type="GO" id="GO:0004521">
    <property type="term" value="F:RNA endonuclease activity"/>
    <property type="evidence" value="ECO:0007669"/>
    <property type="project" value="UniProtKB-UniRule"/>
</dbReference>
<dbReference type="GO" id="GO:0008270">
    <property type="term" value="F:zinc ion binding"/>
    <property type="evidence" value="ECO:0007669"/>
    <property type="project" value="UniProtKB-UniRule"/>
</dbReference>
<dbReference type="GO" id="GO:0006364">
    <property type="term" value="P:rRNA processing"/>
    <property type="evidence" value="ECO:0007669"/>
    <property type="project" value="UniProtKB-UniRule"/>
</dbReference>
<dbReference type="Gene3D" id="3.40.390.30">
    <property type="entry name" value="Metalloproteases ('zincins'), catalytic domain"/>
    <property type="match status" value="1"/>
</dbReference>
<dbReference type="HAMAP" id="MF_00009">
    <property type="entry name" value="Endoribonucl_YbeY"/>
    <property type="match status" value="1"/>
</dbReference>
<dbReference type="InterPro" id="IPR023091">
    <property type="entry name" value="MetalPrtase_cat_dom_sf_prd"/>
</dbReference>
<dbReference type="InterPro" id="IPR002036">
    <property type="entry name" value="YbeY"/>
</dbReference>
<dbReference type="InterPro" id="IPR020549">
    <property type="entry name" value="YbeY_CS"/>
</dbReference>
<dbReference type="NCBIfam" id="TIGR00043">
    <property type="entry name" value="rRNA maturation RNase YbeY"/>
    <property type="match status" value="1"/>
</dbReference>
<dbReference type="PANTHER" id="PTHR46986">
    <property type="entry name" value="ENDORIBONUCLEASE YBEY, CHLOROPLASTIC"/>
    <property type="match status" value="1"/>
</dbReference>
<dbReference type="PANTHER" id="PTHR46986:SF1">
    <property type="entry name" value="ENDORIBONUCLEASE YBEY, CHLOROPLASTIC"/>
    <property type="match status" value="1"/>
</dbReference>
<dbReference type="Pfam" id="PF02130">
    <property type="entry name" value="YbeY"/>
    <property type="match status" value="1"/>
</dbReference>
<dbReference type="SUPFAM" id="SSF55486">
    <property type="entry name" value="Metalloproteases ('zincins'), catalytic domain"/>
    <property type="match status" value="1"/>
</dbReference>
<dbReference type="PROSITE" id="PS01306">
    <property type="entry name" value="UPF0054"/>
    <property type="match status" value="1"/>
</dbReference>
<protein>
    <recommendedName>
        <fullName evidence="1">Endoribonuclease YbeY</fullName>
        <ecNumber evidence="1">3.1.-.-</ecNumber>
    </recommendedName>
</protein>
<proteinExistence type="inferred from homology"/>